<keyword id="KW-0297">G-protein coupled receptor</keyword>
<keyword id="KW-0325">Glycoprotein</keyword>
<keyword id="KW-0472">Membrane</keyword>
<keyword id="KW-0675">Receptor</keyword>
<keyword id="KW-0716">Sensory transduction</keyword>
<keyword id="KW-0919">Taste</keyword>
<keyword id="KW-0807">Transducer</keyword>
<keyword id="KW-0812">Transmembrane</keyword>
<keyword id="KW-1133">Transmembrane helix</keyword>
<comment type="function">
    <text evidence="1">Receptor that may play a role in the perception of bitterness and is gustducin-linked. May play a role in sensing the chemical composition of the gastrointestinal content. The activity of this receptor may stimulate alpha gustducin, mediate PLC-beta-2 activation and lead to the gating of TRPM5 (By similarity).</text>
</comment>
<comment type="subcellular location">
    <subcellularLocation>
        <location>Membrane</location>
        <topology>Multi-pass membrane protein</topology>
    </subcellularLocation>
</comment>
<comment type="miscellaneous">
    <text>Most taste cells may be activated by a limited number of bitter compounds; individual taste cells can discriminate among bitter stimuli.</text>
</comment>
<comment type="similarity">
    <text evidence="3">Belongs to the G-protein coupled receptor T2R family.</text>
</comment>
<name>T2R41_PONPY</name>
<feature type="chain" id="PRO_0000082299" description="Taste receptor type 2 member 41">
    <location>
        <begin position="1"/>
        <end position="307"/>
    </location>
</feature>
<feature type="topological domain" description="Extracellular" evidence="2">
    <location>
        <begin position="1"/>
        <end position="7"/>
    </location>
</feature>
<feature type="transmembrane region" description="Helical; Name=1" evidence="2">
    <location>
        <begin position="8"/>
        <end position="28"/>
    </location>
</feature>
<feature type="topological domain" description="Cytoplasmic" evidence="2">
    <location>
        <begin position="29"/>
        <end position="40"/>
    </location>
</feature>
<feature type="transmembrane region" description="Helical; Name=2" evidence="2">
    <location>
        <begin position="41"/>
        <end position="61"/>
    </location>
</feature>
<feature type="topological domain" description="Extracellular" evidence="2">
    <location>
        <begin position="62"/>
        <end position="88"/>
    </location>
</feature>
<feature type="transmembrane region" description="Helical; Name=3" evidence="2">
    <location>
        <begin position="89"/>
        <end position="109"/>
    </location>
</feature>
<feature type="topological domain" description="Cytoplasmic" evidence="2">
    <location>
        <begin position="110"/>
        <end position="129"/>
    </location>
</feature>
<feature type="transmembrane region" description="Helical; Name=4" evidence="2">
    <location>
        <begin position="130"/>
        <end position="150"/>
    </location>
</feature>
<feature type="topological domain" description="Extracellular" evidence="2">
    <location>
        <begin position="151"/>
        <end position="183"/>
    </location>
</feature>
<feature type="transmembrane region" description="Helical; Name=5" evidence="2">
    <location>
        <begin position="184"/>
        <end position="204"/>
    </location>
</feature>
<feature type="topological domain" description="Cytoplasmic" evidence="2">
    <location>
        <begin position="205"/>
        <end position="234"/>
    </location>
</feature>
<feature type="transmembrane region" description="Helical; Name=6" evidence="2">
    <location>
        <begin position="235"/>
        <end position="255"/>
    </location>
</feature>
<feature type="topological domain" description="Extracellular" evidence="2">
    <location>
        <begin position="256"/>
        <end position="264"/>
    </location>
</feature>
<feature type="transmembrane region" description="Helical; Name=7" evidence="2">
    <location>
        <begin position="265"/>
        <end position="285"/>
    </location>
</feature>
<feature type="topological domain" description="Cytoplasmic" evidence="2">
    <location>
        <begin position="286"/>
        <end position="307"/>
    </location>
</feature>
<feature type="glycosylation site" description="N-linked (GlcNAc...) asparagine" evidence="2">
    <location>
        <position position="167"/>
    </location>
</feature>
<protein>
    <recommendedName>
        <fullName>Taste receptor type 2 member 41</fullName>
        <shortName>T2R41</shortName>
    </recommendedName>
</protein>
<organism>
    <name type="scientific">Pongo pygmaeus</name>
    <name type="common">Bornean orangutan</name>
    <dbReference type="NCBI Taxonomy" id="9600"/>
    <lineage>
        <taxon>Eukaryota</taxon>
        <taxon>Metazoa</taxon>
        <taxon>Chordata</taxon>
        <taxon>Craniata</taxon>
        <taxon>Vertebrata</taxon>
        <taxon>Euteleostomi</taxon>
        <taxon>Mammalia</taxon>
        <taxon>Eutheria</taxon>
        <taxon>Euarchontoglires</taxon>
        <taxon>Primates</taxon>
        <taxon>Haplorrhini</taxon>
        <taxon>Catarrhini</taxon>
        <taxon>Hominidae</taxon>
        <taxon>Pongo</taxon>
    </lineage>
</organism>
<dbReference type="EMBL" id="AY724987">
    <property type="protein sequence ID" value="AAU21173.1"/>
    <property type="molecule type" value="Genomic_DNA"/>
</dbReference>
<dbReference type="GlyCosmos" id="Q645U6">
    <property type="glycosylation" value="1 site, No reported glycans"/>
</dbReference>
<dbReference type="GO" id="GO:0005886">
    <property type="term" value="C:plasma membrane"/>
    <property type="evidence" value="ECO:0007669"/>
    <property type="project" value="UniProtKB-ARBA"/>
</dbReference>
<dbReference type="GO" id="GO:0033038">
    <property type="term" value="F:bitter taste receptor activity"/>
    <property type="evidence" value="ECO:0007669"/>
    <property type="project" value="InterPro"/>
</dbReference>
<dbReference type="GO" id="GO:0004930">
    <property type="term" value="F:G protein-coupled receptor activity"/>
    <property type="evidence" value="ECO:0007669"/>
    <property type="project" value="UniProtKB-KW"/>
</dbReference>
<dbReference type="CDD" id="cd15018">
    <property type="entry name" value="7tm_TAS2R41-like"/>
    <property type="match status" value="1"/>
</dbReference>
<dbReference type="FunFam" id="1.20.1070.10:FF:000055">
    <property type="entry name" value="Taste receptor type 2"/>
    <property type="match status" value="1"/>
</dbReference>
<dbReference type="Gene3D" id="1.20.1070.10">
    <property type="entry name" value="Rhodopsin 7-helix transmembrane proteins"/>
    <property type="match status" value="1"/>
</dbReference>
<dbReference type="InterPro" id="IPR007960">
    <property type="entry name" value="TAS2R"/>
</dbReference>
<dbReference type="PANTHER" id="PTHR11394">
    <property type="entry name" value="TASTE RECEPTOR TYPE 2"/>
    <property type="match status" value="1"/>
</dbReference>
<dbReference type="PANTHER" id="PTHR11394:SF73">
    <property type="entry name" value="TASTE RECEPTOR TYPE 2 MEMBER 41"/>
    <property type="match status" value="1"/>
</dbReference>
<dbReference type="Pfam" id="PF05296">
    <property type="entry name" value="TAS2R"/>
    <property type="match status" value="1"/>
</dbReference>
<dbReference type="SUPFAM" id="SSF81321">
    <property type="entry name" value="Family A G protein-coupled receptor-like"/>
    <property type="match status" value="1"/>
</dbReference>
<gene>
    <name type="primary">TAS2R41</name>
</gene>
<reference key="1">
    <citation type="journal article" date="2005" name="Mol. Biol. Evol.">
        <title>Evolution of bitter taste receptors in humans and apes.</title>
        <authorList>
            <person name="Fischer A."/>
            <person name="Gilad Y."/>
            <person name="Man O."/>
            <person name="Paeaebo S."/>
        </authorList>
    </citation>
    <scope>NUCLEOTIDE SEQUENCE [GENOMIC DNA]</scope>
</reference>
<evidence type="ECO:0000250" key="1"/>
<evidence type="ECO:0000255" key="2"/>
<evidence type="ECO:0000305" key="3"/>
<proteinExistence type="inferred from homology"/>
<sequence>MQAALTAFFMLFFSLLSLLGIAANGFIVLVLGREWLQYGRLLPLDMILISLGVSRFCLQLVGTVYNFYYSAHKVEYSGGLSRQFFHLHWHFLNLATFXFCSWLSVLFCVKXANITHPTFLWLKWRFPGWVPWLLLGSVLISFIITLLLFWVNYPVYQEFLIRKFSGNMTYEWNTRIEMYYLPSLKLVIWSIPCSVFLVSIMLLINSLRRHTWRMQHNGHSLQDPSTQAHTRAXKSLISFLILYVLSFLSLIIDATKFISMQNDFYWPWQTAVYLGVSVHPFILIFSNLKLRSVFWKLLLLARGFWVA</sequence>
<accession>Q645U6</accession>